<feature type="chain" id="PRO_0000452253" description="Meiotic drive suppressor wtf2">
    <location>
        <begin position="1"/>
        <end position="244"/>
    </location>
</feature>
<feature type="transmembrane region" description="Helical" evidence="4">
    <location>
        <begin position="73"/>
        <end position="93"/>
    </location>
</feature>
<feature type="transmembrane region" description="Helical" evidence="4">
    <location>
        <begin position="110"/>
        <end position="130"/>
    </location>
</feature>
<feature type="transmembrane region" description="Helical" evidence="4">
    <location>
        <begin position="149"/>
        <end position="169"/>
    </location>
</feature>
<feature type="transmembrane region" description="Helical" evidence="4">
    <location>
        <begin position="183"/>
        <end position="203"/>
    </location>
</feature>
<feature type="region of interest" description="Disordered" evidence="5">
    <location>
        <begin position="1"/>
        <end position="68"/>
    </location>
</feature>
<feature type="compositionally biased region" description="Polar residues" evidence="5">
    <location>
        <begin position="1"/>
        <end position="10"/>
    </location>
</feature>
<feature type="compositionally biased region" description="Basic and acidic residues" evidence="5">
    <location>
        <begin position="17"/>
        <end position="30"/>
    </location>
</feature>
<comment type="function">
    <text evidence="1 2 6">Acts as a suppressor component of the dual wtf meiotic drive system, and can suppress but not confer meiotic drive by compatible poisons (PubMed:28631612). Wtf meiotic drive systems promote unequal transmission of alleles from the parental zygote to progeny spores by encoding a poison and an antidote from the same locus; the poison is trans-acting and forms toxic aggregates in all spores within an ascus, wherease the antidote is spore-specific and targets aggregates for degradation by the vacuole (By similarity). Meiotic drive by wtf systems therefore lead to poisoning of all progeny that do not inherit the dual poison/antidote allele, or express a compatible antidote (By similarity).</text>
</comment>
<comment type="subunit">
    <text evidence="1 3">Homomer (By similarity). Interacts with other proteins that exhibit high sequence similarity (By similarity).</text>
</comment>
<comment type="subcellular location">
    <subcellularLocation>
        <location evidence="1 4">Spore membrane</location>
        <topology evidence="4">Multi-pass membrane protein</topology>
    </subcellularLocation>
    <subcellularLocation>
        <location evidence="1 4">Vacuole membrane</location>
        <topology evidence="4">Multi-pass membrane protein</topology>
    </subcellularLocation>
</comment>
<comment type="similarity">
    <text evidence="8">Belongs to the WTF family.</text>
</comment>
<gene>
    <name evidence="9" type="primary">wtf2</name>
</gene>
<protein>
    <recommendedName>
        <fullName evidence="7">Meiotic drive suppressor wtf2</fullName>
    </recommendedName>
</protein>
<accession>A0A218N030</accession>
<reference evidence="9" key="1">
    <citation type="journal article" date="2017" name="Elife">
        <title>wtf genes are prolific dual poison-antidote meiotic drivers.</title>
        <authorList>
            <person name="Nuckolls N.L."/>
            <person name="Bravo Nunez M.A."/>
            <person name="Eickbush M.T."/>
            <person name="Young J.M."/>
            <person name="Lange J.J."/>
            <person name="Yu J.S."/>
            <person name="Smith G.R."/>
            <person name="Jaspersen S.L."/>
            <person name="Malik H.S."/>
            <person name="Zanders S.E."/>
        </authorList>
    </citation>
    <scope>NUCLEOTIDE SEQUENCE [GENOMIC DNA]</scope>
    <scope>FUNCTION</scope>
</reference>
<name>WTF2_SCHKA</name>
<organism evidence="9">
    <name type="scientific">Schizosaccharomyces kambucha</name>
    <name type="common">Fission yeast</name>
    <dbReference type="NCBI Taxonomy" id="204045"/>
    <lineage>
        <taxon>Eukaryota</taxon>
        <taxon>Fungi</taxon>
        <taxon>Dikarya</taxon>
        <taxon>Ascomycota</taxon>
        <taxon>Taphrinomycotina</taxon>
        <taxon>Schizosaccharomycetes</taxon>
        <taxon>Schizosaccharomycetales</taxon>
        <taxon>Schizosaccharomycetaceae</taxon>
        <taxon>Schizosaccharomyces</taxon>
    </lineage>
</organism>
<keyword id="KW-0472">Membrane</keyword>
<keyword id="KW-0812">Transmembrane</keyword>
<keyword id="KW-1133">Transmembrane helix</keyword>
<keyword id="KW-0926">Vacuole</keyword>
<evidence type="ECO:0000250" key="1">
    <source>
        <dbReference type="UniProtKB" id="A0A218N034"/>
    </source>
</evidence>
<evidence type="ECO:0000250" key="2">
    <source>
        <dbReference type="UniProtKB" id="A0A482ATU4"/>
    </source>
</evidence>
<evidence type="ECO:0000250" key="3">
    <source>
        <dbReference type="UniProtKB" id="O74420"/>
    </source>
</evidence>
<evidence type="ECO:0000255" key="4"/>
<evidence type="ECO:0000256" key="5">
    <source>
        <dbReference type="SAM" id="MobiDB-lite"/>
    </source>
</evidence>
<evidence type="ECO:0000269" key="6">
    <source>
    </source>
</evidence>
<evidence type="ECO:0000303" key="7">
    <source>
    </source>
</evidence>
<evidence type="ECO:0000305" key="8"/>
<evidence type="ECO:0000312" key="9">
    <source>
        <dbReference type="EMBL" id="ASF62181.1"/>
    </source>
</evidence>
<sequence>MKNNYTSLKSSIDEEGELKTDHEIDLEKGPLPEYDSEEESTLPPYSDHARLSNSPNTHRENNPSRSTDNSSPFLIKLLISFTPIYVLNVLAICYLKYNDAFFKNYGAAEWTLFGFWCLVCTLALIFLTYFYETWTKAVGKGIKHFLKKWENMPMAFSEVFLFNILVGSPRMNLRYIFGDRWGLKWSLAEHITFVVLSILVFIAETVKPGSIRVNLIRKMGYEAKQQVNEYTAVPLREMNPESEA</sequence>
<proteinExistence type="inferred from homology"/>
<dbReference type="EMBL" id="KY652740">
    <property type="protein sequence ID" value="ASF62181.1"/>
    <property type="molecule type" value="Genomic_DNA"/>
</dbReference>
<dbReference type="EMBL" id="MH837432">
    <property type="protein sequence ID" value="QBL54497.1"/>
    <property type="molecule type" value="Genomic_DNA"/>
</dbReference>
<dbReference type="GO" id="GO:0005774">
    <property type="term" value="C:vacuolar membrane"/>
    <property type="evidence" value="ECO:0007669"/>
    <property type="project" value="UniProtKB-SubCell"/>
</dbReference>
<dbReference type="GO" id="GO:0110134">
    <property type="term" value="P:meiotic drive"/>
    <property type="evidence" value="ECO:0007669"/>
    <property type="project" value="InterPro"/>
</dbReference>
<dbReference type="InterPro" id="IPR004982">
    <property type="entry name" value="WTF"/>
</dbReference>
<dbReference type="Pfam" id="PF03303">
    <property type="entry name" value="WTF"/>
    <property type="match status" value="1"/>
</dbReference>